<sequence length="328" mass="36707">MEGPEAVQRATELIEQRLAQEEETEKLRRSAPGKLSMDMLVLEEEKRLGVQSPALQKVKGQERVRKTSLDLRREIIDVGGIQNLIELRKKRKQKKRDALAAAQEPPPEPEEITGPVNEETFLKAAVEGKMKVIDKYLADGGSADTCDEFRRTALHRASLEGHMEILEKLLENGATVDFQDRLDCTAMHWACRGGHLEVVRLLQSRGADTNVRDKLLSTPLHVAVRTGHVEIVEHFLSLGLDINAKDREGDSALHDAVRLNRYKIIKLLLLHGADMMAKNLAGKTPTDLVQLWQADTRHALEHPEPESEQNGLERPGSGRETPQPIPAQ</sequence>
<protein>
    <recommendedName>
        <fullName>Ankyrin repeat domain-containing protein 2</fullName>
    </recommendedName>
    <alternativeName>
        <fullName>Skeletal muscle ankyrin repeat protein</fullName>
        <shortName>mArpp</shortName>
    </alternativeName>
</protein>
<name>ANKR2_MOUSE</name>
<keyword id="KW-0040">ANK repeat</keyword>
<keyword id="KW-0963">Cytoplasm</keyword>
<keyword id="KW-0539">Nucleus</keyword>
<keyword id="KW-0597">Phosphoprotein</keyword>
<keyword id="KW-1185">Reference proteome</keyword>
<keyword id="KW-0677">Repeat</keyword>
<comment type="function">
    <text evidence="4 5">Functions as a negative regulator of myocyte differentiation. May interact with both sarcoplasmic structural proteins and nuclear proteins to regulate gene expression during muscle development and in response to muscle stress.</text>
</comment>
<comment type="subunit">
    <text evidence="1 4 5">Interacts with ID3; both proteins cooperate in myoblast differentiation. Interacts with TTN/titin (By similarity). Interacts (via ANK repeats) with TCAP; the interaction is direct (By similarity). Interacts with TJP1 (via PDZ domains) (By similarity). Interacts with PML; the interaction is direct (By similarity). Interacts with p53/TP53 (By similarity). Interacts with YBX1 (By similarity). Interacts with AKT2.</text>
</comment>
<comment type="interaction">
    <interactant intactId="EBI-8854438">
        <id>Q9WV06</id>
    </interactant>
    <interactant intactId="EBI-309448">
        <id>P41133</id>
        <label>Id3</label>
    </interactant>
    <organismsDiffer>false</organismsDiffer>
    <experiments>4</experiments>
</comment>
<comment type="subcellular location">
    <subcellularLocation>
        <location>Cytoplasm</location>
        <location>Myofibril</location>
        <location>Sarcomere</location>
        <location>I band</location>
    </subcellularLocation>
    <subcellularLocation>
        <location>Cytoplasm</location>
        <location>Cytosol</location>
    </subcellularLocation>
    <subcellularLocation>
        <location>Nucleus</location>
    </subcellularLocation>
    <subcellularLocation>
        <location evidence="1">Nucleus</location>
        <location evidence="1">PML body</location>
    </subcellularLocation>
    <text>In the sarcoplasm of differentiated striated muscle cells, where it is cytosolic and enriched in the I band. In nucleus and PML bodies of proliferating and undifferentiated myoblasts. Associates with the euchromatin in the nucleus of myocytes upon muscle stress.</text>
</comment>
<comment type="tissue specificity">
    <text evidence="3">Expressed by myoblasts (at protein level). Expressed in skeletal and cardiac muscles.</text>
</comment>
<comment type="developmental stage">
    <text evidence="3">Expressed at 9.5 dpc, with a pattern of expression that shows restricted localization to the myotome of somites. By 13.5 dpc, expression is observed within intercostal and back muscles. At 14.5 dpc and 15.5 dpc, expression is observed in tail myotomal muscles, and in intervertebral and back muscles. Hybridization was also detected within limb muscles. This pattern of expression was maintained at least up until 17.5 dpc. No localization within the heart.</text>
</comment>
<comment type="induction">
    <text evidence="3">Up-regulated in response to mechanical stretch of skeletal muscle (hypertrophy mechanically-induced).</text>
</comment>
<comment type="PTM">
    <text evidence="1">Phosphorylation at Ser-68 by PKB/AKT2 in response to oxidative stress induces translocation to the nucleus and negatively regulates myoblast differentiation.</text>
</comment>
<comment type="sequence caution" evidence="6">
    <conflict type="erroneous initiation">
        <sequence resource="EMBL-CDS" id="BAB88557"/>
    </conflict>
    <text>Extended N-terminus.</text>
</comment>
<comment type="sequence caution" evidence="6">
    <conflict type="erroneous initiation">
        <sequence resource="EMBL-CDS" id="BAB88558"/>
    </conflict>
    <text>Extended N-terminus.</text>
</comment>
<comment type="sequence caution" evidence="6">
    <conflict type="erroneous initiation">
        <sequence resource="EMBL-CDS" id="BAE21246"/>
    </conflict>
    <text>Extended N-terminus.</text>
</comment>
<feature type="chain" id="PRO_0000066898" description="Ankyrin repeat domain-containing protein 2">
    <location>
        <begin position="1"/>
        <end position="328"/>
    </location>
</feature>
<feature type="repeat" description="ANK 1">
    <location>
        <begin position="116"/>
        <end position="145"/>
    </location>
</feature>
<feature type="repeat" description="ANK 2">
    <location>
        <begin position="149"/>
        <end position="178"/>
    </location>
</feature>
<feature type="repeat" description="ANK 3">
    <location>
        <begin position="182"/>
        <end position="211"/>
    </location>
</feature>
<feature type="repeat" description="ANK 4">
    <location>
        <begin position="215"/>
        <end position="244"/>
    </location>
</feature>
<feature type="repeat" description="ANK 5">
    <location>
        <begin position="248"/>
        <end position="277"/>
    </location>
</feature>
<feature type="region of interest" description="Disordered" evidence="2">
    <location>
        <begin position="96"/>
        <end position="116"/>
    </location>
</feature>
<feature type="region of interest" description="Disordered" evidence="2">
    <location>
        <begin position="297"/>
        <end position="328"/>
    </location>
</feature>
<feature type="modified residue" description="Phosphoserine" evidence="7">
    <location>
        <position position="36"/>
    </location>
</feature>
<feature type="modified residue" description="Phosphoserine; by PKB/AKT2" evidence="4">
    <location>
        <position position="68"/>
    </location>
</feature>
<accession>Q9WV06</accession>
<accession>B2RS77</accession>
<accession>Q8QZX4</accession>
<organism>
    <name type="scientific">Mus musculus</name>
    <name type="common">Mouse</name>
    <dbReference type="NCBI Taxonomy" id="10090"/>
    <lineage>
        <taxon>Eukaryota</taxon>
        <taxon>Metazoa</taxon>
        <taxon>Chordata</taxon>
        <taxon>Craniata</taxon>
        <taxon>Vertebrata</taxon>
        <taxon>Euteleostomi</taxon>
        <taxon>Mammalia</taxon>
        <taxon>Eutheria</taxon>
        <taxon>Euarchontoglires</taxon>
        <taxon>Glires</taxon>
        <taxon>Rodentia</taxon>
        <taxon>Myomorpha</taxon>
        <taxon>Muroidea</taxon>
        <taxon>Muridae</taxon>
        <taxon>Murinae</taxon>
        <taxon>Mus</taxon>
        <taxon>Mus</taxon>
    </lineage>
</organism>
<evidence type="ECO:0000250" key="1"/>
<evidence type="ECO:0000256" key="2">
    <source>
        <dbReference type="SAM" id="MobiDB-lite"/>
    </source>
</evidence>
<evidence type="ECO:0000269" key="3">
    <source>
    </source>
</evidence>
<evidence type="ECO:0000269" key="4">
    <source>
    </source>
</evidence>
<evidence type="ECO:0000269" key="5">
    <source>
    </source>
</evidence>
<evidence type="ECO:0000305" key="6"/>
<evidence type="ECO:0007744" key="7">
    <source>
    </source>
</evidence>
<reference key="1">
    <citation type="journal article" date="2000" name="Genomics">
        <title>Identification of Ankrd2, a novel skeletal muscle gene coding for a stretch-responsive ankyrin-repeat protein.</title>
        <authorList>
            <person name="Kemp T.J."/>
            <person name="Sadusky T.J."/>
            <person name="Saltisi F."/>
            <person name="Carey N."/>
            <person name="Moss J."/>
            <person name="Yang S.Y."/>
            <person name="Sassoon D.A."/>
            <person name="Goldspink G."/>
            <person name="Coulton G.R."/>
        </authorList>
    </citation>
    <scope>NUCLEOTIDE SEQUENCE [GENOMIC DNA / MRNA]</scope>
    <scope>TISSUE SPECIFICITY</scope>
    <scope>DEVELOPMENTAL STAGE</scope>
    <scope>INDUCTION BY MECHANICAL STRETCH</scope>
    <source>
        <strain>129/Sv</strain>
        <strain>C57BL/10</strain>
        <tissue>Skeletal muscle</tissue>
        <tissue>Spleen</tissue>
    </source>
</reference>
<reference key="2">
    <citation type="journal article" date="2001" name="Biochem. Biophys. Res. Commun.">
        <title>Characterization of human skeletal muscle Ankrd2.</title>
        <authorList>
            <person name="Pallavicini A."/>
            <person name="Kojic S."/>
            <person name="Bean C."/>
            <person name="Vainzof M."/>
            <person name="Salamon M."/>
            <person name="Ievolella C."/>
            <person name="Bortoletto G."/>
            <person name="Pacchioni B."/>
            <person name="Zatz M."/>
            <person name="Lanfranchi G."/>
            <person name="Faulkner G."/>
            <person name="Valle G."/>
        </authorList>
    </citation>
    <scope>NUCLEOTIDE SEQUENCE [MRNA]</scope>
    <source>
        <tissue>Diaphragm</tissue>
    </source>
</reference>
<reference key="3">
    <citation type="journal article" date="2002" name="Lab. Invest.">
        <title>Arpp, a new homolog of carp, is preferentially expressed in type 1 skeletal muscle fibers and is markedly induced by denervation.</title>
        <authorList>
            <person name="Tsukamoto Y."/>
            <person name="Senda T."/>
            <person name="Nakano T."/>
            <person name="Nakada C."/>
            <person name="Hida T."/>
            <person name="Ishiguro N."/>
            <person name="Kondo G."/>
            <person name="Baba T."/>
            <person name="Sato K."/>
            <person name="Osaki M."/>
            <person name="Mori S."/>
            <person name="Ito H."/>
            <person name="Moriyama M."/>
        </authorList>
    </citation>
    <scope>NUCLEOTIDE SEQUENCE [GENOMIC DNA / MRNA]</scope>
    <source>
        <strain>129/SvJ</strain>
        <strain>C57BL/6J</strain>
        <tissue>Skeletal muscle</tissue>
    </source>
</reference>
<reference key="4">
    <citation type="journal article" date="2005" name="Science">
        <title>The transcriptional landscape of the mammalian genome.</title>
        <authorList>
            <person name="Carninci P."/>
            <person name="Kasukawa T."/>
            <person name="Katayama S."/>
            <person name="Gough J."/>
            <person name="Frith M.C."/>
            <person name="Maeda N."/>
            <person name="Oyama R."/>
            <person name="Ravasi T."/>
            <person name="Lenhard B."/>
            <person name="Wells C."/>
            <person name="Kodzius R."/>
            <person name="Shimokawa K."/>
            <person name="Bajic V.B."/>
            <person name="Brenner S.E."/>
            <person name="Batalov S."/>
            <person name="Forrest A.R."/>
            <person name="Zavolan M."/>
            <person name="Davis M.J."/>
            <person name="Wilming L.G."/>
            <person name="Aidinis V."/>
            <person name="Allen J.E."/>
            <person name="Ambesi-Impiombato A."/>
            <person name="Apweiler R."/>
            <person name="Aturaliya R.N."/>
            <person name="Bailey T.L."/>
            <person name="Bansal M."/>
            <person name="Baxter L."/>
            <person name="Beisel K.W."/>
            <person name="Bersano T."/>
            <person name="Bono H."/>
            <person name="Chalk A.M."/>
            <person name="Chiu K.P."/>
            <person name="Choudhary V."/>
            <person name="Christoffels A."/>
            <person name="Clutterbuck D.R."/>
            <person name="Crowe M.L."/>
            <person name="Dalla E."/>
            <person name="Dalrymple B.P."/>
            <person name="de Bono B."/>
            <person name="Della Gatta G."/>
            <person name="di Bernardo D."/>
            <person name="Down T."/>
            <person name="Engstrom P."/>
            <person name="Fagiolini M."/>
            <person name="Faulkner G."/>
            <person name="Fletcher C.F."/>
            <person name="Fukushima T."/>
            <person name="Furuno M."/>
            <person name="Futaki S."/>
            <person name="Gariboldi M."/>
            <person name="Georgii-Hemming P."/>
            <person name="Gingeras T.R."/>
            <person name="Gojobori T."/>
            <person name="Green R.E."/>
            <person name="Gustincich S."/>
            <person name="Harbers M."/>
            <person name="Hayashi Y."/>
            <person name="Hensch T.K."/>
            <person name="Hirokawa N."/>
            <person name="Hill D."/>
            <person name="Huminiecki L."/>
            <person name="Iacono M."/>
            <person name="Ikeo K."/>
            <person name="Iwama A."/>
            <person name="Ishikawa T."/>
            <person name="Jakt M."/>
            <person name="Kanapin A."/>
            <person name="Katoh M."/>
            <person name="Kawasawa Y."/>
            <person name="Kelso J."/>
            <person name="Kitamura H."/>
            <person name="Kitano H."/>
            <person name="Kollias G."/>
            <person name="Krishnan S.P."/>
            <person name="Kruger A."/>
            <person name="Kummerfeld S.K."/>
            <person name="Kurochkin I.V."/>
            <person name="Lareau L.F."/>
            <person name="Lazarevic D."/>
            <person name="Lipovich L."/>
            <person name="Liu J."/>
            <person name="Liuni S."/>
            <person name="McWilliam S."/>
            <person name="Madan Babu M."/>
            <person name="Madera M."/>
            <person name="Marchionni L."/>
            <person name="Matsuda H."/>
            <person name="Matsuzawa S."/>
            <person name="Miki H."/>
            <person name="Mignone F."/>
            <person name="Miyake S."/>
            <person name="Morris K."/>
            <person name="Mottagui-Tabar S."/>
            <person name="Mulder N."/>
            <person name="Nakano N."/>
            <person name="Nakauchi H."/>
            <person name="Ng P."/>
            <person name="Nilsson R."/>
            <person name="Nishiguchi S."/>
            <person name="Nishikawa S."/>
            <person name="Nori F."/>
            <person name="Ohara O."/>
            <person name="Okazaki Y."/>
            <person name="Orlando V."/>
            <person name="Pang K.C."/>
            <person name="Pavan W.J."/>
            <person name="Pavesi G."/>
            <person name="Pesole G."/>
            <person name="Petrovsky N."/>
            <person name="Piazza S."/>
            <person name="Reed J."/>
            <person name="Reid J.F."/>
            <person name="Ring B.Z."/>
            <person name="Ringwald M."/>
            <person name="Rost B."/>
            <person name="Ruan Y."/>
            <person name="Salzberg S.L."/>
            <person name="Sandelin A."/>
            <person name="Schneider C."/>
            <person name="Schoenbach C."/>
            <person name="Sekiguchi K."/>
            <person name="Semple C.A."/>
            <person name="Seno S."/>
            <person name="Sessa L."/>
            <person name="Sheng Y."/>
            <person name="Shibata Y."/>
            <person name="Shimada H."/>
            <person name="Shimada K."/>
            <person name="Silva D."/>
            <person name="Sinclair B."/>
            <person name="Sperling S."/>
            <person name="Stupka E."/>
            <person name="Sugiura K."/>
            <person name="Sultana R."/>
            <person name="Takenaka Y."/>
            <person name="Taki K."/>
            <person name="Tammoja K."/>
            <person name="Tan S.L."/>
            <person name="Tang S."/>
            <person name="Taylor M.S."/>
            <person name="Tegner J."/>
            <person name="Teichmann S.A."/>
            <person name="Ueda H.R."/>
            <person name="van Nimwegen E."/>
            <person name="Verardo R."/>
            <person name="Wei C.L."/>
            <person name="Yagi K."/>
            <person name="Yamanishi H."/>
            <person name="Zabarovsky E."/>
            <person name="Zhu S."/>
            <person name="Zimmer A."/>
            <person name="Hide W."/>
            <person name="Bult C."/>
            <person name="Grimmond S.M."/>
            <person name="Teasdale R.D."/>
            <person name="Liu E.T."/>
            <person name="Brusic V."/>
            <person name="Quackenbush J."/>
            <person name="Wahlestedt C."/>
            <person name="Mattick J.S."/>
            <person name="Hume D.A."/>
            <person name="Kai C."/>
            <person name="Sasaki D."/>
            <person name="Tomaru Y."/>
            <person name="Fukuda S."/>
            <person name="Kanamori-Katayama M."/>
            <person name="Suzuki M."/>
            <person name="Aoki J."/>
            <person name="Arakawa T."/>
            <person name="Iida J."/>
            <person name="Imamura K."/>
            <person name="Itoh M."/>
            <person name="Kato T."/>
            <person name="Kawaji H."/>
            <person name="Kawagashira N."/>
            <person name="Kawashima T."/>
            <person name="Kojima M."/>
            <person name="Kondo S."/>
            <person name="Konno H."/>
            <person name="Nakano K."/>
            <person name="Ninomiya N."/>
            <person name="Nishio T."/>
            <person name="Okada M."/>
            <person name="Plessy C."/>
            <person name="Shibata K."/>
            <person name="Shiraki T."/>
            <person name="Suzuki S."/>
            <person name="Tagami M."/>
            <person name="Waki K."/>
            <person name="Watahiki A."/>
            <person name="Okamura-Oho Y."/>
            <person name="Suzuki H."/>
            <person name="Kawai J."/>
            <person name="Hayashizaki Y."/>
        </authorList>
    </citation>
    <scope>NUCLEOTIDE SEQUENCE [LARGE SCALE MRNA]</scope>
    <source>
        <strain>C57BL/6J</strain>
        <tissue>Head</tissue>
    </source>
</reference>
<reference key="5">
    <citation type="journal article" date="2009" name="PLoS Biol.">
        <title>Lineage-specific biology revealed by a finished genome assembly of the mouse.</title>
        <authorList>
            <person name="Church D.M."/>
            <person name="Goodstadt L."/>
            <person name="Hillier L.W."/>
            <person name="Zody M.C."/>
            <person name="Goldstein S."/>
            <person name="She X."/>
            <person name="Bult C.J."/>
            <person name="Agarwala R."/>
            <person name="Cherry J.L."/>
            <person name="DiCuccio M."/>
            <person name="Hlavina W."/>
            <person name="Kapustin Y."/>
            <person name="Meric P."/>
            <person name="Maglott D."/>
            <person name="Birtle Z."/>
            <person name="Marques A.C."/>
            <person name="Graves T."/>
            <person name="Zhou S."/>
            <person name="Teague B."/>
            <person name="Potamousis K."/>
            <person name="Churas C."/>
            <person name="Place M."/>
            <person name="Herschleb J."/>
            <person name="Runnheim R."/>
            <person name="Forrest D."/>
            <person name="Amos-Landgraf J."/>
            <person name="Schwartz D.C."/>
            <person name="Cheng Z."/>
            <person name="Lindblad-Toh K."/>
            <person name="Eichler E.E."/>
            <person name="Ponting C.P."/>
        </authorList>
    </citation>
    <scope>NUCLEOTIDE SEQUENCE [LARGE SCALE GENOMIC DNA]</scope>
    <source>
        <strain>C57BL/6J</strain>
    </source>
</reference>
<reference key="6">
    <citation type="submission" date="2005-07" db="EMBL/GenBank/DDBJ databases">
        <authorList>
            <person name="Mural R.J."/>
            <person name="Adams M.D."/>
            <person name="Myers E.W."/>
            <person name="Smith H.O."/>
            <person name="Venter J.C."/>
        </authorList>
    </citation>
    <scope>NUCLEOTIDE SEQUENCE [LARGE SCALE GENOMIC DNA]</scope>
</reference>
<reference key="7">
    <citation type="journal article" date="2004" name="Genome Res.">
        <title>The status, quality, and expansion of the NIH full-length cDNA project: the Mammalian Gene Collection (MGC).</title>
        <authorList>
            <consortium name="The MGC Project Team"/>
        </authorList>
    </citation>
    <scope>NUCLEOTIDE SEQUENCE [LARGE SCALE MRNA]</scope>
    <source>
        <tissue>Lung</tissue>
    </source>
</reference>
<reference key="8">
    <citation type="journal article" date="2008" name="Biochim. Biophys. Acta">
        <title>The effects of Ankrd2 alteration indicate its involvement in cell cycle regulation during muscle differentiation.</title>
        <authorList>
            <person name="Bean C."/>
            <person name="Facchinello N."/>
            <person name="Faulkner G."/>
            <person name="Lanfranchi G."/>
        </authorList>
    </citation>
    <scope>SUBCELLULAR LOCATION</scope>
</reference>
<reference key="9">
    <citation type="journal article" date="2008" name="Histochem. Cell Biol.">
        <title>Arpp/Ankrd2, a member of the muscle ankyrin repeat proteins (MARPs), translocates from the I-band to the nucleus after muscle injury.</title>
        <authorList>
            <person name="Tsukamoto Y."/>
            <person name="Hijiya N."/>
            <person name="Yano S."/>
            <person name="Yokoyama S."/>
            <person name="Nakada C."/>
            <person name="Uchida T."/>
            <person name="Matsuura K."/>
            <person name="Moriyama M."/>
        </authorList>
    </citation>
    <scope>SUBCELLULAR LOCATION</scope>
</reference>
<reference key="10">
    <citation type="journal article" date="2010" name="Cell">
        <title>A tissue-specific atlas of mouse protein phosphorylation and expression.</title>
        <authorList>
            <person name="Huttlin E.L."/>
            <person name="Jedrychowski M.P."/>
            <person name="Elias J.E."/>
            <person name="Goswami T."/>
            <person name="Rad R."/>
            <person name="Beausoleil S.A."/>
            <person name="Villen J."/>
            <person name="Haas W."/>
            <person name="Sowa M.E."/>
            <person name="Gygi S.P."/>
        </authorList>
    </citation>
    <scope>PHOSPHORYLATION [LARGE SCALE ANALYSIS] AT SER-36</scope>
    <scope>IDENTIFICATION BY MASS SPECTROMETRY [LARGE SCALE ANALYSIS]</scope>
    <source>
        <tissue>Brown adipose tissue</tissue>
    </source>
</reference>
<reference key="11">
    <citation type="journal article" date="2011" name="Mol. Biol. Cell">
        <title>Ankrd2/ARPP is a novel Akt2 specific substrate and regulates myogenic differentiation upon cellular exposure to H(2)O(2).</title>
        <authorList>
            <person name="Cenni V."/>
            <person name="Bavelloni A."/>
            <person name="Beretti F."/>
            <person name="Tagliavini F."/>
            <person name="Manzoli L."/>
            <person name="Lattanzi G."/>
            <person name="Maraldi N.M."/>
            <person name="Cocco L."/>
            <person name="Marmiroli S."/>
        </authorList>
    </citation>
    <scope>FUNCTION</scope>
    <scope>PHOSPHORYLATION AT SER-68 BY PKB/AKT2</scope>
    <scope>INTERACTION WITH AKT2</scope>
    <scope>SUBCELLULAR LOCATION</scope>
</reference>
<reference key="12">
    <citation type="journal article" date="2013" name="J. Biol. Chem.">
        <title>Ankyrin repeat domain protein 2 and inhibitor of DNA binding 3 cooperatively inhibit myoblast differentiation by physical interaction.</title>
        <authorList>
            <person name="Mohamed J.S."/>
            <person name="Lopez M.A."/>
            <person name="Cox G.A."/>
            <person name="Boriek A.M."/>
        </authorList>
    </citation>
    <scope>FUNCTION IN MYOBLAST DIFFERENTIATION</scope>
    <scope>INTERACTION WITH ID3</scope>
</reference>
<gene>
    <name type="primary">Ankrd2</name>
    <name type="synonym">Arpp</name>
</gene>
<dbReference type="EMBL" id="AJ249346">
    <property type="protein sequence ID" value="CAB99432.1"/>
    <property type="molecule type" value="Genomic_DNA"/>
</dbReference>
<dbReference type="EMBL" id="AJ245514">
    <property type="protein sequence ID" value="CAB99431.1"/>
    <property type="molecule type" value="mRNA"/>
</dbReference>
<dbReference type="EMBL" id="AJ011118">
    <property type="protein sequence ID" value="CAB46646.1"/>
    <property type="molecule type" value="mRNA"/>
</dbReference>
<dbReference type="EMBL" id="AB076256">
    <property type="protein sequence ID" value="BAB88557.1"/>
    <property type="status" value="ALT_INIT"/>
    <property type="molecule type" value="mRNA"/>
</dbReference>
<dbReference type="EMBL" id="AB076257">
    <property type="protein sequence ID" value="BAB88558.1"/>
    <property type="status" value="ALT_INIT"/>
    <property type="molecule type" value="Genomic_DNA"/>
</dbReference>
<dbReference type="EMBL" id="AK132585">
    <property type="protein sequence ID" value="BAE21246.1"/>
    <property type="status" value="ALT_INIT"/>
    <property type="molecule type" value="mRNA"/>
</dbReference>
<dbReference type="EMBL" id="AC133503">
    <property type="status" value="NOT_ANNOTATED_CDS"/>
    <property type="molecule type" value="Genomic_DNA"/>
</dbReference>
<dbReference type="EMBL" id="CH466534">
    <property type="protein sequence ID" value="EDL41876.1"/>
    <property type="molecule type" value="Genomic_DNA"/>
</dbReference>
<dbReference type="EMBL" id="BC138760">
    <property type="protein sequence ID" value="AAI38761.1"/>
    <property type="molecule type" value="mRNA"/>
</dbReference>
<dbReference type="EMBL" id="BC138761">
    <property type="protein sequence ID" value="AAI38762.1"/>
    <property type="molecule type" value="mRNA"/>
</dbReference>
<dbReference type="RefSeq" id="NP_064417.1">
    <property type="nucleotide sequence ID" value="NM_020033.1"/>
</dbReference>
<dbReference type="SMR" id="Q9WV06"/>
<dbReference type="BioGRID" id="208117">
    <property type="interactions" value="2"/>
</dbReference>
<dbReference type="FunCoup" id="Q9WV06">
    <property type="interactions" value="178"/>
</dbReference>
<dbReference type="IntAct" id="Q9WV06">
    <property type="interactions" value="1"/>
</dbReference>
<dbReference type="STRING" id="10090.ENSMUSP00000026172"/>
<dbReference type="iPTMnet" id="Q9WV06"/>
<dbReference type="PhosphoSitePlus" id="Q9WV06"/>
<dbReference type="jPOST" id="Q9WV06"/>
<dbReference type="PaxDb" id="10090-ENSMUSP00000026172"/>
<dbReference type="ProteomicsDB" id="296043"/>
<dbReference type="Antibodypedia" id="30973">
    <property type="antibodies" value="90 antibodies from 22 providers"/>
</dbReference>
<dbReference type="DNASU" id="56642"/>
<dbReference type="Ensembl" id="ENSMUST00000026172.3">
    <property type="protein sequence ID" value="ENSMUSP00000026172.3"/>
    <property type="gene ID" value="ENSMUSG00000025172.4"/>
</dbReference>
<dbReference type="GeneID" id="56642"/>
<dbReference type="KEGG" id="mmu:56642"/>
<dbReference type="UCSC" id="uc008hna.1">
    <property type="organism name" value="mouse"/>
</dbReference>
<dbReference type="AGR" id="MGI:1861447"/>
<dbReference type="CTD" id="26287"/>
<dbReference type="MGI" id="MGI:1861447">
    <property type="gene designation" value="Ankrd2"/>
</dbReference>
<dbReference type="VEuPathDB" id="HostDB:ENSMUSG00000025172"/>
<dbReference type="eggNOG" id="KOG0504">
    <property type="taxonomic scope" value="Eukaryota"/>
</dbReference>
<dbReference type="GeneTree" id="ENSGT00940000153956"/>
<dbReference type="HOGENOM" id="CLU_000134_11_0_1"/>
<dbReference type="InParanoid" id="Q9WV06"/>
<dbReference type="PhylomeDB" id="Q9WV06"/>
<dbReference type="TreeFam" id="TF331650"/>
<dbReference type="BioGRID-ORCS" id="56642">
    <property type="hits" value="3 hits in 76 CRISPR screens"/>
</dbReference>
<dbReference type="ChiTaRS" id="Ankrd2">
    <property type="organism name" value="mouse"/>
</dbReference>
<dbReference type="PRO" id="PR:Q9WV06"/>
<dbReference type="Proteomes" id="UP000000589">
    <property type="component" value="Chromosome 19"/>
</dbReference>
<dbReference type="RNAct" id="Q9WV06">
    <property type="molecule type" value="protein"/>
</dbReference>
<dbReference type="Bgee" id="ENSMUSG00000025172">
    <property type="expression patterns" value="Expressed in soleus muscle and 79 other cell types or tissues"/>
</dbReference>
<dbReference type="ExpressionAtlas" id="Q9WV06">
    <property type="expression patterns" value="baseline and differential"/>
</dbReference>
<dbReference type="GO" id="GO:0005829">
    <property type="term" value="C:cytosol"/>
    <property type="evidence" value="ECO:0000314"/>
    <property type="project" value="UniProtKB"/>
</dbReference>
<dbReference type="GO" id="GO:0000791">
    <property type="term" value="C:euchromatin"/>
    <property type="evidence" value="ECO:0000314"/>
    <property type="project" value="UniProtKB"/>
</dbReference>
<dbReference type="GO" id="GO:0031674">
    <property type="term" value="C:I band"/>
    <property type="evidence" value="ECO:0000314"/>
    <property type="project" value="MGI"/>
</dbReference>
<dbReference type="GO" id="GO:0030016">
    <property type="term" value="C:myofibril"/>
    <property type="evidence" value="ECO:0000314"/>
    <property type="project" value="UniProtKB"/>
</dbReference>
<dbReference type="GO" id="GO:0005634">
    <property type="term" value="C:nucleus"/>
    <property type="evidence" value="ECO:0000314"/>
    <property type="project" value="UniProtKB"/>
</dbReference>
<dbReference type="GO" id="GO:0016605">
    <property type="term" value="C:PML body"/>
    <property type="evidence" value="ECO:0000314"/>
    <property type="project" value="MGI"/>
</dbReference>
<dbReference type="GO" id="GO:0030017">
    <property type="term" value="C:sarcomere"/>
    <property type="evidence" value="ECO:0000314"/>
    <property type="project" value="MGI"/>
</dbReference>
<dbReference type="GO" id="GO:0016528">
    <property type="term" value="C:sarcoplasm"/>
    <property type="evidence" value="ECO:0000314"/>
    <property type="project" value="MGI"/>
</dbReference>
<dbReference type="GO" id="GO:0003682">
    <property type="term" value="F:chromatin binding"/>
    <property type="evidence" value="ECO:0000314"/>
    <property type="project" value="MGI"/>
</dbReference>
<dbReference type="GO" id="GO:0043422">
    <property type="term" value="F:protein kinase B binding"/>
    <property type="evidence" value="ECO:0000353"/>
    <property type="project" value="UniProtKB"/>
</dbReference>
<dbReference type="GO" id="GO:0061629">
    <property type="term" value="F:RNA polymerase II-specific DNA-binding transcription factor binding"/>
    <property type="evidence" value="ECO:0000266"/>
    <property type="project" value="MGI"/>
</dbReference>
<dbReference type="GO" id="GO:0031432">
    <property type="term" value="F:titin binding"/>
    <property type="evidence" value="ECO:0000353"/>
    <property type="project" value="UniProtKB"/>
</dbReference>
<dbReference type="GO" id="GO:0014902">
    <property type="term" value="P:myotube differentiation"/>
    <property type="evidence" value="ECO:0000314"/>
    <property type="project" value="MGI"/>
</dbReference>
<dbReference type="GO" id="GO:0045662">
    <property type="term" value="P:negative regulation of myoblast differentiation"/>
    <property type="evidence" value="ECO:0000315"/>
    <property type="project" value="UniProtKB"/>
</dbReference>
<dbReference type="GO" id="GO:0010832">
    <property type="term" value="P:negative regulation of myotube differentiation"/>
    <property type="evidence" value="ECO:0000314"/>
    <property type="project" value="MGI"/>
</dbReference>
<dbReference type="GO" id="GO:0000122">
    <property type="term" value="P:negative regulation of transcription by RNA polymerase II"/>
    <property type="evidence" value="ECO:0000266"/>
    <property type="project" value="MGI"/>
</dbReference>
<dbReference type="GO" id="GO:0001817">
    <property type="term" value="P:regulation of cytokine production"/>
    <property type="evidence" value="ECO:0000315"/>
    <property type="project" value="MGI"/>
</dbReference>
<dbReference type="GO" id="GO:1902253">
    <property type="term" value="P:regulation of intrinsic apoptotic signaling pathway by p53 class mediator"/>
    <property type="evidence" value="ECO:0000314"/>
    <property type="project" value="MGI"/>
</dbReference>
<dbReference type="GO" id="GO:2000291">
    <property type="term" value="P:regulation of myoblast proliferation"/>
    <property type="evidence" value="ECO:0000314"/>
    <property type="project" value="MGI"/>
</dbReference>
<dbReference type="GO" id="GO:0006357">
    <property type="term" value="P:regulation of transcription by RNA polymerase II"/>
    <property type="evidence" value="ECO:0000266"/>
    <property type="project" value="MGI"/>
</dbReference>
<dbReference type="GO" id="GO:0035994">
    <property type="term" value="P:response to muscle stretch"/>
    <property type="evidence" value="ECO:0000304"/>
    <property type="project" value="MGI"/>
</dbReference>
<dbReference type="GO" id="GO:0035914">
    <property type="term" value="P:skeletal muscle cell differentiation"/>
    <property type="evidence" value="ECO:0000315"/>
    <property type="project" value="MGI"/>
</dbReference>
<dbReference type="FunFam" id="1.25.40.20:FF:000172">
    <property type="entry name" value="Ankyrin repeat domain-containing protein 2"/>
    <property type="match status" value="1"/>
</dbReference>
<dbReference type="FunFam" id="1.25.40.20:FF:000093">
    <property type="entry name" value="ankyrin repeat domain-containing protein 2"/>
    <property type="match status" value="1"/>
</dbReference>
<dbReference type="Gene3D" id="1.25.40.20">
    <property type="entry name" value="Ankyrin repeat-containing domain"/>
    <property type="match status" value="2"/>
</dbReference>
<dbReference type="InterPro" id="IPR002110">
    <property type="entry name" value="Ankyrin_rpt"/>
</dbReference>
<dbReference type="InterPro" id="IPR036770">
    <property type="entry name" value="Ankyrin_rpt-contain_sf"/>
</dbReference>
<dbReference type="PANTHER" id="PTHR24126:SF3">
    <property type="entry name" value="ANKYRIN REPEAT DOMAIN-CONTAINING PROTEIN 2"/>
    <property type="match status" value="1"/>
</dbReference>
<dbReference type="PANTHER" id="PTHR24126">
    <property type="entry name" value="ANKYRIN REPEAT, PH AND SEC7 DOMAIN CONTAINING PROTEIN SECG-RELATED"/>
    <property type="match status" value="1"/>
</dbReference>
<dbReference type="Pfam" id="PF12796">
    <property type="entry name" value="Ank_2"/>
    <property type="match status" value="1"/>
</dbReference>
<dbReference type="Pfam" id="PF13637">
    <property type="entry name" value="Ank_4"/>
    <property type="match status" value="1"/>
</dbReference>
<dbReference type="PRINTS" id="PR01415">
    <property type="entry name" value="ANKYRIN"/>
</dbReference>
<dbReference type="SMART" id="SM00248">
    <property type="entry name" value="ANK"/>
    <property type="match status" value="4"/>
</dbReference>
<dbReference type="SUPFAM" id="SSF48403">
    <property type="entry name" value="Ankyrin repeat"/>
    <property type="match status" value="1"/>
</dbReference>
<dbReference type="PROSITE" id="PS50297">
    <property type="entry name" value="ANK_REP_REGION"/>
    <property type="match status" value="1"/>
</dbReference>
<dbReference type="PROSITE" id="PS50088">
    <property type="entry name" value="ANK_REPEAT"/>
    <property type="match status" value="4"/>
</dbReference>
<proteinExistence type="evidence at protein level"/>